<keyword id="KW-1185">Reference proteome</keyword>
<keyword id="KW-0687">Ribonucleoprotein</keyword>
<keyword id="KW-0689">Ribosomal protein</keyword>
<keyword id="KW-0694">RNA-binding</keyword>
<keyword id="KW-0699">rRNA-binding</keyword>
<protein>
    <recommendedName>
        <fullName evidence="1">Small ribosomal subunit protein uS19</fullName>
    </recommendedName>
    <alternativeName>
        <fullName evidence="2">30S ribosomal protein S19</fullName>
    </alternativeName>
</protein>
<name>RS19_XANCP</name>
<dbReference type="EMBL" id="AE008922">
    <property type="protein sequence ID" value="AAM40209.1"/>
    <property type="molecule type" value="Genomic_DNA"/>
</dbReference>
<dbReference type="RefSeq" id="NP_636285.1">
    <property type="nucleotide sequence ID" value="NC_003902.1"/>
</dbReference>
<dbReference type="RefSeq" id="WP_005993369.1">
    <property type="nucleotide sequence ID" value="NC_003902.1"/>
</dbReference>
<dbReference type="SMR" id="Q8PC45"/>
<dbReference type="STRING" id="190485.XCC0899"/>
<dbReference type="EnsemblBacteria" id="AAM40209">
    <property type="protein sequence ID" value="AAM40209"/>
    <property type="gene ID" value="XCC0899"/>
</dbReference>
<dbReference type="GeneID" id="97210508"/>
<dbReference type="KEGG" id="xcc:XCC0899"/>
<dbReference type="PATRIC" id="fig|190485.4.peg.971"/>
<dbReference type="eggNOG" id="COG0185">
    <property type="taxonomic scope" value="Bacteria"/>
</dbReference>
<dbReference type="HOGENOM" id="CLU_144911_0_1_6"/>
<dbReference type="OrthoDB" id="9797833at2"/>
<dbReference type="PRO" id="PR:Q8PC45"/>
<dbReference type="Proteomes" id="UP000001010">
    <property type="component" value="Chromosome"/>
</dbReference>
<dbReference type="GO" id="GO:0005737">
    <property type="term" value="C:cytoplasm"/>
    <property type="evidence" value="ECO:0007669"/>
    <property type="project" value="UniProtKB-ARBA"/>
</dbReference>
<dbReference type="GO" id="GO:0015935">
    <property type="term" value="C:small ribosomal subunit"/>
    <property type="evidence" value="ECO:0007669"/>
    <property type="project" value="InterPro"/>
</dbReference>
<dbReference type="GO" id="GO:0019843">
    <property type="term" value="F:rRNA binding"/>
    <property type="evidence" value="ECO:0007669"/>
    <property type="project" value="UniProtKB-UniRule"/>
</dbReference>
<dbReference type="GO" id="GO:0003735">
    <property type="term" value="F:structural constituent of ribosome"/>
    <property type="evidence" value="ECO:0000318"/>
    <property type="project" value="GO_Central"/>
</dbReference>
<dbReference type="GO" id="GO:0000028">
    <property type="term" value="P:ribosomal small subunit assembly"/>
    <property type="evidence" value="ECO:0000318"/>
    <property type="project" value="GO_Central"/>
</dbReference>
<dbReference type="GO" id="GO:0006412">
    <property type="term" value="P:translation"/>
    <property type="evidence" value="ECO:0007669"/>
    <property type="project" value="UniProtKB-UniRule"/>
</dbReference>
<dbReference type="FunFam" id="3.30.860.10:FF:000001">
    <property type="entry name" value="30S ribosomal protein S19"/>
    <property type="match status" value="1"/>
</dbReference>
<dbReference type="Gene3D" id="3.30.860.10">
    <property type="entry name" value="30s Ribosomal Protein S19, Chain A"/>
    <property type="match status" value="1"/>
</dbReference>
<dbReference type="HAMAP" id="MF_00531">
    <property type="entry name" value="Ribosomal_uS19"/>
    <property type="match status" value="1"/>
</dbReference>
<dbReference type="InterPro" id="IPR002222">
    <property type="entry name" value="Ribosomal_uS19"/>
</dbReference>
<dbReference type="InterPro" id="IPR005732">
    <property type="entry name" value="Ribosomal_uS19_bac-type"/>
</dbReference>
<dbReference type="InterPro" id="IPR020934">
    <property type="entry name" value="Ribosomal_uS19_CS"/>
</dbReference>
<dbReference type="InterPro" id="IPR023575">
    <property type="entry name" value="Ribosomal_uS19_SF"/>
</dbReference>
<dbReference type="NCBIfam" id="TIGR01050">
    <property type="entry name" value="rpsS_bact"/>
    <property type="match status" value="1"/>
</dbReference>
<dbReference type="PANTHER" id="PTHR11880">
    <property type="entry name" value="RIBOSOMAL PROTEIN S19P FAMILY MEMBER"/>
    <property type="match status" value="1"/>
</dbReference>
<dbReference type="PANTHER" id="PTHR11880:SF8">
    <property type="entry name" value="SMALL RIBOSOMAL SUBUNIT PROTEIN US19M"/>
    <property type="match status" value="1"/>
</dbReference>
<dbReference type="Pfam" id="PF00203">
    <property type="entry name" value="Ribosomal_S19"/>
    <property type="match status" value="1"/>
</dbReference>
<dbReference type="PIRSF" id="PIRSF002144">
    <property type="entry name" value="Ribosomal_S19"/>
    <property type="match status" value="1"/>
</dbReference>
<dbReference type="PRINTS" id="PR00975">
    <property type="entry name" value="RIBOSOMALS19"/>
</dbReference>
<dbReference type="SUPFAM" id="SSF54570">
    <property type="entry name" value="Ribosomal protein S19"/>
    <property type="match status" value="1"/>
</dbReference>
<dbReference type="PROSITE" id="PS00323">
    <property type="entry name" value="RIBOSOMAL_S19"/>
    <property type="match status" value="1"/>
</dbReference>
<evidence type="ECO:0000255" key="1">
    <source>
        <dbReference type="HAMAP-Rule" id="MF_00531"/>
    </source>
</evidence>
<evidence type="ECO:0000305" key="2"/>
<sequence length="89" mass="9782">MARSLKKGPFVDHHLAKKVESAAGSKKPIKTWSRRSMILPEMVGITIAVHNGKNHIPVLVNENMVGHKLGEFAVTRTFKGHGGDKKSSR</sequence>
<reference key="1">
    <citation type="journal article" date="2002" name="Nature">
        <title>Comparison of the genomes of two Xanthomonas pathogens with differing host specificities.</title>
        <authorList>
            <person name="da Silva A.C.R."/>
            <person name="Ferro J.A."/>
            <person name="Reinach F.C."/>
            <person name="Farah C.S."/>
            <person name="Furlan L.R."/>
            <person name="Quaggio R.B."/>
            <person name="Monteiro-Vitorello C.B."/>
            <person name="Van Sluys M.A."/>
            <person name="Almeida N.F. Jr."/>
            <person name="Alves L.M.C."/>
            <person name="do Amaral A.M."/>
            <person name="Bertolini M.C."/>
            <person name="Camargo L.E.A."/>
            <person name="Camarotte G."/>
            <person name="Cannavan F."/>
            <person name="Cardozo J."/>
            <person name="Chambergo F."/>
            <person name="Ciapina L.P."/>
            <person name="Cicarelli R.M.B."/>
            <person name="Coutinho L.L."/>
            <person name="Cursino-Santos J.R."/>
            <person name="El-Dorry H."/>
            <person name="Faria J.B."/>
            <person name="Ferreira A.J.S."/>
            <person name="Ferreira R.C.C."/>
            <person name="Ferro M.I.T."/>
            <person name="Formighieri E.F."/>
            <person name="Franco M.C."/>
            <person name="Greggio C.C."/>
            <person name="Gruber A."/>
            <person name="Katsuyama A.M."/>
            <person name="Kishi L.T."/>
            <person name="Leite R.P."/>
            <person name="Lemos E.G.M."/>
            <person name="Lemos M.V.F."/>
            <person name="Locali E.C."/>
            <person name="Machado M.A."/>
            <person name="Madeira A.M.B.N."/>
            <person name="Martinez-Rossi N.M."/>
            <person name="Martins E.C."/>
            <person name="Meidanis J."/>
            <person name="Menck C.F.M."/>
            <person name="Miyaki C.Y."/>
            <person name="Moon D.H."/>
            <person name="Moreira L.M."/>
            <person name="Novo M.T.M."/>
            <person name="Okura V.K."/>
            <person name="Oliveira M.C."/>
            <person name="Oliveira V.R."/>
            <person name="Pereira H.A."/>
            <person name="Rossi A."/>
            <person name="Sena J.A.D."/>
            <person name="Silva C."/>
            <person name="de Souza R.F."/>
            <person name="Spinola L.A.F."/>
            <person name="Takita M.A."/>
            <person name="Tamura R.E."/>
            <person name="Teixeira E.C."/>
            <person name="Tezza R.I.D."/>
            <person name="Trindade dos Santos M."/>
            <person name="Truffi D."/>
            <person name="Tsai S.M."/>
            <person name="White F.F."/>
            <person name="Setubal J.C."/>
            <person name="Kitajima J.P."/>
        </authorList>
    </citation>
    <scope>NUCLEOTIDE SEQUENCE [LARGE SCALE GENOMIC DNA]</scope>
    <source>
        <strain>ATCC 33913 / DSM 3586 / NCPPB 528 / LMG 568 / P 25</strain>
    </source>
</reference>
<accession>Q8PC45</accession>
<feature type="chain" id="PRO_0000129943" description="Small ribosomal subunit protein uS19">
    <location>
        <begin position="1"/>
        <end position="89"/>
    </location>
</feature>
<gene>
    <name evidence="1" type="primary">rpsS</name>
    <name type="ordered locus">XCC0899</name>
</gene>
<comment type="function">
    <text evidence="1">Protein S19 forms a complex with S13 that binds strongly to the 16S ribosomal RNA.</text>
</comment>
<comment type="similarity">
    <text evidence="1">Belongs to the universal ribosomal protein uS19 family.</text>
</comment>
<organism>
    <name type="scientific">Xanthomonas campestris pv. campestris (strain ATCC 33913 / DSM 3586 / NCPPB 528 / LMG 568 / P 25)</name>
    <dbReference type="NCBI Taxonomy" id="190485"/>
    <lineage>
        <taxon>Bacteria</taxon>
        <taxon>Pseudomonadati</taxon>
        <taxon>Pseudomonadota</taxon>
        <taxon>Gammaproteobacteria</taxon>
        <taxon>Lysobacterales</taxon>
        <taxon>Lysobacteraceae</taxon>
        <taxon>Xanthomonas</taxon>
    </lineage>
</organism>
<proteinExistence type="inferred from homology"/>